<proteinExistence type="evidence at protein level"/>
<gene>
    <name type="primary">SPT20</name>
    <name type="synonym">ADA5</name>
    <name type="ordered locus">YOL148C</name>
</gene>
<name>SPT20_YEAST</name>
<sequence length="604" mass="67796">MSANSPTGNDPHVFGIPVNATPSNMGSPGSPVNVPPPMNPAVANVNHPVMRTNSNSNANEGTRTLTREQIQQLQQRQRLLLQQRLLEQQRKQQALQNYEAQFYQMLMTLNKRPKRLYNFVEDADSILKKYEQYLHSFEFHIYENNYKICAPANSRLQQQQKQPELTSDGLILTKNNETLKEFLEYVARGRIPDAIMEVLRDCNIQFYEGNLILQVYDHTNTVDVTPKENKPNLNSSSSPSNNNSTQDNSKIQQPSEPNSGVANTGANTANKKASFKRPRVYRTLLKPNDLTTYYDMMSYADNARFSDSIYQQFESEILTLTKRNLSLSVPLNPYEHRDMLEETAFSEPHWDSEKKSFIHEHRAESTREGTKGVVGHIEERDEFPQHSSNYEQLMLIMNERTTTITNSTFAVSLTKNAMEIASSSSNGVRGASSSTSNSASNTRNNSLANGNQVALAAAAAAAAVGSTMGNDNNQFSRLKFIEQWRINKEKRKQQALSANINPTPFNARISMTAPLTPQQQLLQRQQQALEQQQNGGAMKNANKRSGNNATSNNNNNNNNLDKPKVKRPRKNAKKSESGTPAPKKKRMTKKKQSASSTPSSTTMS</sequence>
<reference key="1">
    <citation type="journal article" date="1996" name="Mol. Cell. Biol.">
        <title>ADA5/SPT20 links the ADA and SPT genes, which are involved in yeast transcription.</title>
        <authorList>
            <person name="Marcus G.A."/>
            <person name="Horiuchi J."/>
            <person name="Silverman N."/>
            <person name="Guarente L."/>
        </authorList>
    </citation>
    <scope>NUCLEOTIDE SEQUENCE [GENOMIC DNA]</scope>
    <source>
        <strain>ATCC MYA-3516 / BWG1-7A</strain>
    </source>
</reference>
<reference key="2">
    <citation type="journal article" date="1996" name="Mol. Cell. Biol.">
        <title>SPT20/ADA5 encodes a novel protein functionally related to the TATA-binding protein and important for transcription in Saccharomyces cerevisiae.</title>
        <authorList>
            <person name="Roberts S.M."/>
            <person name="Winston F."/>
        </authorList>
    </citation>
    <scope>NUCLEOTIDE SEQUENCE [GENOMIC DNA]</scope>
    <source>
        <strain>ATCC 204508 / S288c</strain>
    </source>
</reference>
<reference key="3">
    <citation type="journal article" date="1997" name="Nature">
        <title>The nucleotide sequence of Saccharomyces cerevisiae chromosome XV.</title>
        <authorList>
            <person name="Dujon B."/>
            <person name="Albermann K."/>
            <person name="Aldea M."/>
            <person name="Alexandraki D."/>
            <person name="Ansorge W."/>
            <person name="Arino J."/>
            <person name="Benes V."/>
            <person name="Bohn C."/>
            <person name="Bolotin-Fukuhara M."/>
            <person name="Bordonne R."/>
            <person name="Boyer J."/>
            <person name="Camasses A."/>
            <person name="Casamayor A."/>
            <person name="Casas C."/>
            <person name="Cheret G."/>
            <person name="Cziepluch C."/>
            <person name="Daignan-Fornier B."/>
            <person name="Dang V.-D."/>
            <person name="de Haan M."/>
            <person name="Delius H."/>
            <person name="Durand P."/>
            <person name="Fairhead C."/>
            <person name="Feldmann H."/>
            <person name="Gaillon L."/>
            <person name="Galisson F."/>
            <person name="Gamo F.-J."/>
            <person name="Gancedo C."/>
            <person name="Goffeau A."/>
            <person name="Goulding S.E."/>
            <person name="Grivell L.A."/>
            <person name="Habbig B."/>
            <person name="Hand N.J."/>
            <person name="Hani J."/>
            <person name="Hattenhorst U."/>
            <person name="Hebling U."/>
            <person name="Hernando Y."/>
            <person name="Herrero E."/>
            <person name="Heumann K."/>
            <person name="Hiesel R."/>
            <person name="Hilger F."/>
            <person name="Hofmann B."/>
            <person name="Hollenberg C.P."/>
            <person name="Hughes B."/>
            <person name="Jauniaux J.-C."/>
            <person name="Kalogeropoulos A."/>
            <person name="Katsoulou C."/>
            <person name="Kordes E."/>
            <person name="Lafuente M.J."/>
            <person name="Landt O."/>
            <person name="Louis E.J."/>
            <person name="Maarse A.C."/>
            <person name="Madania A."/>
            <person name="Mannhaupt G."/>
            <person name="Marck C."/>
            <person name="Martin R.P."/>
            <person name="Mewes H.-W."/>
            <person name="Michaux G."/>
            <person name="Paces V."/>
            <person name="Parle-McDermott A.G."/>
            <person name="Pearson B.M."/>
            <person name="Perrin A."/>
            <person name="Pettersson B."/>
            <person name="Poch O."/>
            <person name="Pohl T.M."/>
            <person name="Poirey R."/>
            <person name="Portetelle D."/>
            <person name="Pujol A."/>
            <person name="Purnelle B."/>
            <person name="Ramezani Rad M."/>
            <person name="Rechmann S."/>
            <person name="Schwager C."/>
            <person name="Schweizer M."/>
            <person name="Sor F."/>
            <person name="Sterky F."/>
            <person name="Tarassov I.A."/>
            <person name="Teodoru C."/>
            <person name="Tettelin H."/>
            <person name="Thierry A."/>
            <person name="Tobiasch E."/>
            <person name="Tzermia M."/>
            <person name="Uhlen M."/>
            <person name="Unseld M."/>
            <person name="Valens M."/>
            <person name="Vandenbol M."/>
            <person name="Vetter I."/>
            <person name="Vlcek C."/>
            <person name="Voet M."/>
            <person name="Volckaert G."/>
            <person name="Voss H."/>
            <person name="Wambutt R."/>
            <person name="Wedler H."/>
            <person name="Wiemann S."/>
            <person name="Winsor B."/>
            <person name="Wolfe K.H."/>
            <person name="Zollner A."/>
            <person name="Zumstein E."/>
            <person name="Kleine K."/>
        </authorList>
    </citation>
    <scope>NUCLEOTIDE SEQUENCE [LARGE SCALE GENOMIC DNA]</scope>
    <source>
        <strain>ATCC 204508 / S288c</strain>
    </source>
</reference>
<reference key="4">
    <citation type="journal article" date="2014" name="G3 (Bethesda)">
        <title>The reference genome sequence of Saccharomyces cerevisiae: Then and now.</title>
        <authorList>
            <person name="Engel S.R."/>
            <person name="Dietrich F.S."/>
            <person name="Fisk D.G."/>
            <person name="Binkley G."/>
            <person name="Balakrishnan R."/>
            <person name="Costanzo M.C."/>
            <person name="Dwight S.S."/>
            <person name="Hitz B.C."/>
            <person name="Karra K."/>
            <person name="Nash R.S."/>
            <person name="Weng S."/>
            <person name="Wong E.D."/>
            <person name="Lloyd P."/>
            <person name="Skrzypek M.S."/>
            <person name="Miyasato S.R."/>
            <person name="Simison M."/>
            <person name="Cherry J.M."/>
        </authorList>
    </citation>
    <scope>GENOME REANNOTATION</scope>
    <source>
        <strain>ATCC 204508 / S288c</strain>
    </source>
</reference>
<reference key="5">
    <citation type="journal article" date="1995" name="Yeast">
        <title>DNA sequence analysis of a 13 kbp fragment of the left arm of yeast chromosome XV containing seven new open reading frames.</title>
        <authorList>
            <person name="Casamayor A."/>
            <person name="Aldea M."/>
            <person name="Casas C."/>
            <person name="Herrero E."/>
            <person name="Gamo F.-J."/>
            <person name="Lafuente M.J."/>
            <person name="Gancedo C."/>
            <person name="Arino J."/>
        </authorList>
    </citation>
    <scope>NUCLEOTIDE SEQUENCE [GENOMIC DNA] OF 50-604</scope>
    <source>
        <strain>ATCC 96604 / S288c / FY1679</strain>
    </source>
</reference>
<reference key="6">
    <citation type="journal article" date="1997" name="Mol. Cell. Biol.">
        <title>ADA1, a novel component of the ADA/GCN5 complex, has broader effects than GCN5, ADA2, or ADA3.</title>
        <authorList>
            <person name="Horiuchi J."/>
            <person name="Silverman N."/>
            <person name="Pina B."/>
            <person name="Marcus G.A."/>
            <person name="Guarente L."/>
        </authorList>
    </citation>
    <scope>IDENTIFICATION IN THE ADA/GCN5 COMPLEX</scope>
    <source>
        <strain>ATCC MYA-3516 / BWG1-7A</strain>
    </source>
</reference>
<reference key="7">
    <citation type="journal article" date="1998" name="Cell">
        <title>A subset of TAF(II)s are integral components of the SAGA complex required for nucleosome acetylation and transcriptional stimulation.</title>
        <authorList>
            <person name="Grant P.A."/>
            <person name="Schieltz D."/>
            <person name="Pray-Grant M.G."/>
            <person name="Steger D.J."/>
            <person name="Reese J.C."/>
            <person name="Yates J.R. III"/>
            <person name="Workman J.L."/>
        </authorList>
    </citation>
    <scope>IDENTIFICATION IN THE SAGA COMPLEX</scope>
    <scope>IDENTIFICATION BY MASS SPECTROMETRY</scope>
</reference>
<reference key="8">
    <citation type="journal article" date="1998" name="Mol. Cell">
        <title>The ATM-related cofactor Tra1 is a component of the purified SAGA complex.</title>
        <authorList>
            <person name="Grant P.A."/>
            <person name="Schieltz D."/>
            <person name="Pray-Grant M.G."/>
            <person name="Yates J.R. III"/>
            <person name="Workman J.L."/>
        </authorList>
    </citation>
    <scope>IDENTIFICATION IN A SAGA COMPLEX WITH SPT2; SPT7; SPT8; GCN5; HFI1; ADA2; ADA3 AND TRA1</scope>
</reference>
<reference key="9">
    <citation type="journal article" date="1999" name="J. Biol. Chem.">
        <title>Expanded lysine acetylation specificity of Gcn5 in native complexes.</title>
        <authorList>
            <person name="Grant P.A."/>
            <person name="Eberharter A."/>
            <person name="John S."/>
            <person name="Cook R.G."/>
            <person name="Turner B.M."/>
            <person name="Workman J.L."/>
        </authorList>
    </citation>
    <scope>FUNCTION IN HISTONE ACETYLATION AT THE SAGA COMPLEX</scope>
</reference>
<reference key="10">
    <citation type="journal article" date="2000" name="J. Biol. Chem.">
        <title>The transcriptional co-activator ADA5 is required for HAC1 mRNA processing in vivo.</title>
        <authorList>
            <person name="Welihinda A.A."/>
            <person name="Tirasophon W."/>
            <person name="Kaufman R.J."/>
        </authorList>
    </citation>
    <scope>FUNCTION</scope>
</reference>
<reference key="11">
    <citation type="journal article" date="2000" name="Nature">
        <title>Redundant roles for the TFIID and SAGA complexes in global transcription.</title>
        <authorList>
            <person name="Lee T.I."/>
            <person name="Causton H.C."/>
            <person name="Holstege F.C."/>
            <person name="Shen W.C."/>
            <person name="Hannett N."/>
            <person name="Jennings E.G."/>
            <person name="Winston F."/>
            <person name="Green M.R."/>
            <person name="Young R.A."/>
        </authorList>
    </citation>
    <scope>FUNCTION</scope>
</reference>
<reference key="12">
    <citation type="journal article" date="2002" name="Mol. Cell. Biol.">
        <title>The novel SLIK histone acetyltransferase complex functions in the yeast retrograde response pathway.</title>
        <authorList>
            <person name="Pray-Grant M.G."/>
            <person name="Schieltz D."/>
            <person name="McMahon S.J."/>
            <person name="Wood J.M."/>
            <person name="Kennedy E.L."/>
            <person name="Cook R.G."/>
            <person name="Workman J.L."/>
            <person name="Yates J.R. III"/>
            <person name="Grant P.A."/>
        </authorList>
    </citation>
    <scope>IDENTIFICATION IN THE SLIK COMPLEX</scope>
</reference>
<reference key="13">
    <citation type="journal article" date="2002" name="Proc. Natl. Acad. Sci. U.S.A.">
        <title>SALSA, a variant of yeast SAGA, contains truncated Spt7, which correlates with activated transcription.</title>
        <authorList>
            <person name="Sterner D.E."/>
            <person name="Belotserkovskaya R."/>
            <person name="Berger S.L."/>
        </authorList>
    </citation>
    <scope>IDENTIFICATION IN THE SALSA COMPLEX</scope>
</reference>
<reference key="14">
    <citation type="journal article" date="2003" name="Nature">
        <title>Global analysis of protein expression in yeast.</title>
        <authorList>
            <person name="Ghaemmaghami S."/>
            <person name="Huh W.-K."/>
            <person name="Bower K."/>
            <person name="Howson R.W."/>
            <person name="Belle A."/>
            <person name="Dephoure N."/>
            <person name="O'Shea E.K."/>
            <person name="Weissman J.S."/>
        </authorList>
    </citation>
    <scope>LEVEL OF PROTEIN EXPRESSION [LARGE SCALE ANALYSIS]</scope>
</reference>
<reference key="15">
    <citation type="journal article" date="2005" name="Nature">
        <title>Chd1 chromodomain links histone H3 methylation with SAGA- and SLIK-dependent acetylation.</title>
        <authorList>
            <person name="Pray-Grant M.G."/>
            <person name="Daniel J.A."/>
            <person name="Schieltz D."/>
            <person name="Yates J.R. III"/>
            <person name="Grant P.A."/>
        </authorList>
    </citation>
    <scope>IDENTIFICATION IN THE SLIK COMPLEX</scope>
</reference>
<reference key="16">
    <citation type="journal article" date="2008" name="Mol. Cell. Proteomics">
        <title>A multidimensional chromatography technology for in-depth phosphoproteome analysis.</title>
        <authorList>
            <person name="Albuquerque C.P."/>
            <person name="Smolka M.B."/>
            <person name="Payne S.H."/>
            <person name="Bafna V."/>
            <person name="Eng J."/>
            <person name="Zhou H."/>
        </authorList>
    </citation>
    <scope>PHOSPHORYLATION [LARGE SCALE ANALYSIS] AT THR-516</scope>
    <scope>IDENTIFICATION BY MASS SPECTROMETRY [LARGE SCALE ANALYSIS]</scope>
</reference>
<reference key="17">
    <citation type="journal article" date="2009" name="Science">
        <title>Global analysis of Cdk1 substrate phosphorylation sites provides insights into evolution.</title>
        <authorList>
            <person name="Holt L.J."/>
            <person name="Tuch B.B."/>
            <person name="Villen J."/>
            <person name="Johnson A.D."/>
            <person name="Gygi S.P."/>
            <person name="Morgan D.O."/>
        </authorList>
    </citation>
    <scope>PHOSPHORYLATION [LARGE SCALE ANALYSIS] AT SER-446</scope>
    <scope>IDENTIFICATION BY MASS SPECTROMETRY [LARGE SCALE ANALYSIS]</scope>
</reference>
<reference key="18">
    <citation type="journal article" date="2014" name="EMBO J.">
        <title>Architecture of the Saccharomyces cerevisiae SAGA transcription coactivator complex.</title>
        <authorList>
            <person name="Han Y."/>
            <person name="Luo J."/>
            <person name="Ranish J."/>
            <person name="Hahn S."/>
        </authorList>
    </citation>
    <scope>SUBUNIT</scope>
</reference>
<reference key="19">
    <citation type="journal article" date="2017" name="Mol. Cell">
        <title>SAGA is a general cofactor for RNA polymerase II transcription.</title>
        <authorList>
            <person name="Baptista T."/>
            <person name="Gruenberg S."/>
            <person name="Minoungou N."/>
            <person name="Koster M.J.E."/>
            <person name="Timmers H.T.M."/>
            <person name="Hahn S."/>
            <person name="Devys D."/>
            <person name="Tora L."/>
        </authorList>
    </citation>
    <scope>FUNCTION</scope>
</reference>
<reference key="20">
    <citation type="journal article" date="2021" name="J. Biol. Chem.">
        <title>SAGA and SAGA-like SLIK transcriptional coactivators are structurally and biochemically equivalent.</title>
        <authorList>
            <person name="Adamus K."/>
            <person name="Reboul C."/>
            <person name="Voss J."/>
            <person name="Huang C."/>
            <person name="Schittenhelm R.B."/>
            <person name="Le S.N."/>
            <person name="Ellisdon A.M."/>
            <person name="Elmlund H."/>
            <person name="Boudes M."/>
            <person name="Elmlund D."/>
        </authorList>
    </citation>
    <scope>FUNCTION</scope>
    <scope>SUBUNIT</scope>
</reference>
<reference key="21">
    <citation type="journal article" date="2004" name="Mol. Cell">
        <title>Molecular architecture of the S. cerevisiae SAGA complex.</title>
        <authorList>
            <person name="Wu P.Y."/>
            <person name="Ruhlmann C."/>
            <person name="Winston F."/>
            <person name="Schultz P."/>
        </authorList>
    </citation>
    <scope>3D-STRUCTURE MODELING OF THE SAGA COMPLEX</scope>
</reference>
<reference evidence="17 18 19" key="22">
    <citation type="journal article" date="2020" name="Nature">
        <title>Structure of the transcription coactivator SAGA.</title>
        <authorList>
            <person name="Wang H."/>
            <person name="Dienemann C."/>
            <person name="Stutzer A."/>
            <person name="Urlaub H."/>
            <person name="Cheung A.C.M."/>
            <person name="Cramer P."/>
        </authorList>
    </citation>
    <scope>STRUCTURE BY ELECTRON MICROSCOPY (3.30 ANGSTROMS) IN THE SAGA COMPLEX</scope>
</reference>
<evidence type="ECO:0000256" key="1">
    <source>
        <dbReference type="SAM" id="MobiDB-lite"/>
    </source>
</evidence>
<evidence type="ECO:0000269" key="2">
    <source>
    </source>
</evidence>
<evidence type="ECO:0000269" key="3">
    <source>
    </source>
</evidence>
<evidence type="ECO:0000269" key="4">
    <source>
    </source>
</evidence>
<evidence type="ECO:0000269" key="5">
    <source>
    </source>
</evidence>
<evidence type="ECO:0000269" key="6">
    <source>
    </source>
</evidence>
<evidence type="ECO:0000269" key="7">
    <source>
    </source>
</evidence>
<evidence type="ECO:0000269" key="8">
    <source>
    </source>
</evidence>
<evidence type="ECO:0000269" key="9">
    <source>
    </source>
</evidence>
<evidence type="ECO:0000269" key="10">
    <source>
    </source>
</evidence>
<evidence type="ECO:0000269" key="11">
    <source>
    </source>
</evidence>
<evidence type="ECO:0000269" key="12">
    <source>
    </source>
</evidence>
<evidence type="ECO:0000269" key="13">
    <source>
    </source>
</evidence>
<evidence type="ECO:0000269" key="14">
    <source>
    </source>
</evidence>
<evidence type="ECO:0000269" key="15">
    <source>
    </source>
</evidence>
<evidence type="ECO:0000305" key="16"/>
<evidence type="ECO:0007744" key="17">
    <source>
        <dbReference type="PDB" id="6T9I"/>
    </source>
</evidence>
<evidence type="ECO:0007744" key="18">
    <source>
        <dbReference type="PDB" id="6T9J"/>
    </source>
</evidence>
<evidence type="ECO:0007744" key="19">
    <source>
        <dbReference type="PDB" id="6T9K"/>
    </source>
</evidence>
<evidence type="ECO:0007744" key="20">
    <source>
    </source>
</evidence>
<evidence type="ECO:0007744" key="21">
    <source>
    </source>
</evidence>
<evidence type="ECO:0007829" key="22">
    <source>
        <dbReference type="PDB" id="6T9J"/>
    </source>
</evidence>
<evidence type="ECO:0007829" key="23">
    <source>
        <dbReference type="PDB" id="6T9K"/>
    </source>
</evidence>
<organism>
    <name type="scientific">Saccharomyces cerevisiae (strain ATCC 204508 / S288c)</name>
    <name type="common">Baker's yeast</name>
    <dbReference type="NCBI Taxonomy" id="559292"/>
    <lineage>
        <taxon>Eukaryota</taxon>
        <taxon>Fungi</taxon>
        <taxon>Dikarya</taxon>
        <taxon>Ascomycota</taxon>
        <taxon>Saccharomycotina</taxon>
        <taxon>Saccharomycetes</taxon>
        <taxon>Saccharomycetales</taxon>
        <taxon>Saccharomycetaceae</taxon>
        <taxon>Saccharomyces</taxon>
    </lineage>
</organism>
<accession>P50875</accession>
<accession>D6W1S1</accession>
<dbReference type="EMBL" id="U43153">
    <property type="protein sequence ID" value="AAB07899.1"/>
    <property type="molecule type" value="Genomic_DNA"/>
</dbReference>
<dbReference type="EMBL" id="U22063">
    <property type="protein sequence ID" value="AAB07900.1"/>
    <property type="molecule type" value="Genomic_DNA"/>
</dbReference>
<dbReference type="EMBL" id="Z74890">
    <property type="protein sequence ID" value="CAA99169.1"/>
    <property type="molecule type" value="Genomic_DNA"/>
</dbReference>
<dbReference type="EMBL" id="Z48239">
    <property type="protein sequence ID" value="CAA88279.1"/>
    <property type="molecule type" value="Genomic_DNA"/>
</dbReference>
<dbReference type="EMBL" id="BK006948">
    <property type="protein sequence ID" value="DAA10637.1"/>
    <property type="molecule type" value="Genomic_DNA"/>
</dbReference>
<dbReference type="PIR" id="S58643">
    <property type="entry name" value="S58643"/>
</dbReference>
<dbReference type="RefSeq" id="NP_014493.1">
    <property type="nucleotide sequence ID" value="NM_001183402.1"/>
</dbReference>
<dbReference type="PDB" id="6T9I">
    <property type="method" value="EM"/>
    <property type="resolution" value="3.90 A"/>
    <property type="chains" value="B=1-604"/>
</dbReference>
<dbReference type="PDB" id="6T9J">
    <property type="method" value="EM"/>
    <property type="resolution" value="3.40 A"/>
    <property type="chains" value="B=1-604"/>
</dbReference>
<dbReference type="PDB" id="6T9K">
    <property type="method" value="EM"/>
    <property type="resolution" value="3.30 A"/>
    <property type="chains" value="B=1-604"/>
</dbReference>
<dbReference type="PDBsum" id="6T9I"/>
<dbReference type="PDBsum" id="6T9J"/>
<dbReference type="PDBsum" id="6T9K"/>
<dbReference type="EMDB" id="EMD-10412"/>
<dbReference type="EMDB" id="EMD-10413"/>
<dbReference type="EMDB" id="EMD-10414"/>
<dbReference type="SMR" id="P50875"/>
<dbReference type="BioGRID" id="34269">
    <property type="interactions" value="104"/>
</dbReference>
<dbReference type="ComplexPortal" id="CPX-656">
    <property type="entry name" value="SAGA complex"/>
</dbReference>
<dbReference type="ComplexPortal" id="CPX-675">
    <property type="entry name" value="SLIK (SAGA-like) complex"/>
</dbReference>
<dbReference type="DIP" id="DIP-933N"/>
<dbReference type="FunCoup" id="P50875">
    <property type="interactions" value="507"/>
</dbReference>
<dbReference type="IntAct" id="P50875">
    <property type="interactions" value="87"/>
</dbReference>
<dbReference type="MINT" id="P50875"/>
<dbReference type="STRING" id="4932.YOL148C"/>
<dbReference type="GlyGen" id="P50875">
    <property type="glycosylation" value="4 sites, 1 O-linked glycan (1 site)"/>
</dbReference>
<dbReference type="iPTMnet" id="P50875"/>
<dbReference type="PaxDb" id="4932-YOL148C"/>
<dbReference type="PeptideAtlas" id="P50875"/>
<dbReference type="EnsemblFungi" id="YOL148C_mRNA">
    <property type="protein sequence ID" value="YOL148C"/>
    <property type="gene ID" value="YOL148C"/>
</dbReference>
<dbReference type="GeneID" id="854017"/>
<dbReference type="KEGG" id="sce:YOL148C"/>
<dbReference type="AGR" id="SGD:S000005508"/>
<dbReference type="SGD" id="S000005508">
    <property type="gene designation" value="SPT20"/>
</dbReference>
<dbReference type="VEuPathDB" id="FungiDB:YOL148C"/>
<dbReference type="eggNOG" id="ENOG502QS30">
    <property type="taxonomic scope" value="Eukaryota"/>
</dbReference>
<dbReference type="HOGENOM" id="CLU_431618_0_0_1"/>
<dbReference type="InParanoid" id="P50875"/>
<dbReference type="OMA" id="YDHTNTV"/>
<dbReference type="OrthoDB" id="1932706at2759"/>
<dbReference type="BioCyc" id="YEAST:G3O-33538-MONOMER"/>
<dbReference type="BioGRID-ORCS" id="854017">
    <property type="hits" value="5 hits in 10 CRISPR screens"/>
</dbReference>
<dbReference type="PRO" id="PR:P50875"/>
<dbReference type="Proteomes" id="UP000002311">
    <property type="component" value="Chromosome XV"/>
</dbReference>
<dbReference type="RNAct" id="P50875">
    <property type="molecule type" value="protein"/>
</dbReference>
<dbReference type="GO" id="GO:0005634">
    <property type="term" value="C:nucleus"/>
    <property type="evidence" value="ECO:0000303"/>
    <property type="project" value="ComplexPortal"/>
</dbReference>
<dbReference type="GO" id="GO:0000124">
    <property type="term" value="C:SAGA complex"/>
    <property type="evidence" value="ECO:0000314"/>
    <property type="project" value="SGD"/>
</dbReference>
<dbReference type="GO" id="GO:0046695">
    <property type="term" value="C:SLIK (SAGA-like) complex"/>
    <property type="evidence" value="ECO:0000314"/>
    <property type="project" value="SGD"/>
</dbReference>
<dbReference type="GO" id="GO:0003712">
    <property type="term" value="F:transcription coregulator activity"/>
    <property type="evidence" value="ECO:0000315"/>
    <property type="project" value="SGD"/>
</dbReference>
<dbReference type="GO" id="GO:0006325">
    <property type="term" value="P:chromatin organization"/>
    <property type="evidence" value="ECO:0000314"/>
    <property type="project" value="SGD"/>
</dbReference>
<dbReference type="GO" id="GO:0036498">
    <property type="term" value="P:IRE1-mediated unfolded protein response"/>
    <property type="evidence" value="ECO:0000315"/>
    <property type="project" value="SGD"/>
</dbReference>
<dbReference type="GO" id="GO:0006357">
    <property type="term" value="P:regulation of transcription by RNA polymerase II"/>
    <property type="evidence" value="ECO:0000314"/>
    <property type="project" value="ComplexPortal"/>
</dbReference>
<dbReference type="InterPro" id="IPR021950">
    <property type="entry name" value="Spt20"/>
</dbReference>
<dbReference type="InterPro" id="IPR046468">
    <property type="entry name" value="Spt20-like_SEP"/>
</dbReference>
<dbReference type="PANTHER" id="PTHR13526">
    <property type="entry name" value="TRANSCRIPTION FACTOR SPT20 HOMOLOG"/>
    <property type="match status" value="1"/>
</dbReference>
<dbReference type="PANTHER" id="PTHR13526:SF8">
    <property type="entry name" value="TRANSCRIPTION FACTOR SPT20 HOMOLOG"/>
    <property type="match status" value="1"/>
</dbReference>
<dbReference type="Pfam" id="PF12090">
    <property type="entry name" value="Spt20_SEP"/>
    <property type="match status" value="1"/>
</dbReference>
<keyword id="KW-0002">3D-structure</keyword>
<keyword id="KW-0539">Nucleus</keyword>
<keyword id="KW-0597">Phosphoprotein</keyword>
<keyword id="KW-1185">Reference proteome</keyword>
<keyword id="KW-0804">Transcription</keyword>
<keyword id="KW-0805">Transcription regulation</keyword>
<protein>
    <recommendedName>
        <fullName>SAGA complex subunit SPT20</fullName>
    </recommendedName>
    <alternativeName>
        <fullName>Suppressor of Ty protein 20</fullName>
    </alternativeName>
    <alternativeName>
        <fullName>Transcription factor SPT20</fullName>
    </alternativeName>
</protein>
<comment type="function">
    <text evidence="2 3 4 5 6 9 10 11 12">Component of the transcription coactivator SAGA complex. SAGA acts as a general cofactor required for essentially all RNA polymerase II transcription (PubMed:10864329, PubMed:25216679, PubMed:28918903). At the promoters, SAGA is required for transcription pre-initiation complex (PIC) recruitment. It influences RNA polymerase II transcriptional activity through different activities such as TBP interaction (via core/TAF module) and promoter selectivity, interaction with transcription activators (via Tra1/SPT module), and chromatin modification through histone acetylation (via HAT module) and deubiquitination (via DUB module) (PubMed:31969703). SAGA preferentially acetylates histones H3 (to form H3K9ac, H3K14ac, H3K18ac and H3K23ac) and H2B and deubiquitinates histone H2B (PubMed:10026213). SAGA interacts with DNA via upstream activating sequences (UASs) (PubMed:28918903). Also identified in a modified version of SAGA named SALSA or SLIK (PubMed:12186975, PubMed:12446794). The cleavage of SPT7 and the absence of the SPT8 subunit in SLIK neither drive any major conformational differences in its structure compared with SAGA, nor significantly affect HAT, DUB, or DNA-binding activities (PubMed:33864814). Involved in RNA processing, required for the IRE1/RLG1-dependent splicing reaction of HAC1 mRNA (PubMed:10652329).</text>
</comment>
<comment type="subunit">
    <text evidence="5 6 8 9 11 12 13 14 15">Component of the 1.8 MDa SAGA (Spt-Ada-Gcn5 acetyltransferase) complex, which is composed of 19 subunits TRA1, SPT7, TAF5, NGG1/ADA3, SGF73, SPT20/ADA5, SPT8, TAF12, TAF6, HFI1/ADA1, UBP8, GCN5, ADA2, SPT3, SGF29, TAF10, TAF9, SGF11 and SUS1 (PubMed:31969703, PubMed:9674426, PubMed:9885573). The SAGA complex is composed of 4 modules, namely the HAT (histone acetyltransferase) module (GCN5, ADA2, NGG1/ADA3 and SGF29), the DUB (deubiquitinating) module (UBP8, SGF11, SGF73 and SUS1), the core or TAF (TBP-associated factor) module (TAF5, TAF6, TAF9, TAF10 and TAF12), and the Tra1 or SPT (Suppressor of Ty) module (TRA1, HFI1/ADA1, SPT3, SPT7, SPT8 and SPT20/ADA5). The Tra1/SPT module binds activators, the core module recruits TBP (TATA-binding protein), the HAT module contains the histone H3 acetyltransferase GCN5, and the DUB module comprises the histone H2B deubiquitinase UBP8 (PubMed:25216679, PubMed:31969703). Also identified in an altered form of SAGA, named SALSA (SAGA altered, Spt8 absent) or SLIK (SAGA-like) complex, which contains a C-terminal truncated form of SPT7 and is missing SPT8 (PubMed:12186975, PubMed:12446794, PubMed:15647753). However, it has been shown that the SAGA and SAGA-like SALSA/SLIK transcriptional coactivators are structurally and biochemically equivalent (PubMed:33864814). Component of an ADA/GCN5 complex that consists of HFI1/ADA1, ADA2, NGG1/ADA3, SPT20/ADA5 and GCN5 and probably is a subcomplex of SAGA (PubMed:9154821).</text>
</comment>
<comment type="interaction">
    <interactant intactId="EBI-17751">
        <id>P50875</id>
    </interactant>
    <interactant intactId="EBI-8287">
        <id>Q12060</id>
        <label>HFI1</label>
    </interactant>
    <organismsDiffer>false</organismsDiffer>
    <experiments>14</experiments>
</comment>
<comment type="interaction">
    <interactant intactId="EBI-17751">
        <id>P50875</id>
    </interactant>
    <interactant intactId="EBI-23812">
        <id>P53165</id>
        <label>SGF73</label>
    </interactant>
    <organismsDiffer>false</organismsDiffer>
    <experiments>8</experiments>
</comment>
<comment type="interaction">
    <interactant intactId="EBI-17751">
        <id>P50875</id>
    </interactant>
    <interactant intactId="EBI-17921">
        <id>P06844</id>
        <label>SPT3</label>
    </interactant>
    <organismsDiffer>false</organismsDiffer>
    <experiments>10</experiments>
</comment>
<comment type="subcellular location">
    <subcellularLocation>
        <location evidence="8">Nucleus</location>
    </subcellularLocation>
</comment>
<comment type="miscellaneous">
    <text evidence="7">Present with 4150 molecules/cell in log phase SD medium.</text>
</comment>
<comment type="similarity">
    <text evidence="16">Belongs to the SPT20 family.</text>
</comment>
<feature type="chain" id="PRO_0000072161" description="SAGA complex subunit SPT20">
    <location>
        <begin position="1"/>
        <end position="604"/>
    </location>
</feature>
<feature type="region of interest" description="Disordered" evidence="1">
    <location>
        <begin position="1"/>
        <end position="33"/>
    </location>
</feature>
<feature type="region of interest" description="Disordered" evidence="1">
    <location>
        <begin position="223"/>
        <end position="273"/>
    </location>
</feature>
<feature type="region of interest" description="Disordered" evidence="1">
    <location>
        <begin position="422"/>
        <end position="446"/>
    </location>
</feature>
<feature type="region of interest" description="Disordered" evidence="1">
    <location>
        <begin position="519"/>
        <end position="604"/>
    </location>
</feature>
<feature type="compositionally biased region" description="Low complexity" evidence="1">
    <location>
        <begin position="231"/>
        <end position="249"/>
    </location>
</feature>
<feature type="compositionally biased region" description="Low complexity" evidence="1">
    <location>
        <begin position="258"/>
        <end position="272"/>
    </location>
</feature>
<feature type="compositionally biased region" description="Low complexity" evidence="1">
    <location>
        <begin position="519"/>
        <end position="533"/>
    </location>
</feature>
<feature type="compositionally biased region" description="Low complexity" evidence="1">
    <location>
        <begin position="547"/>
        <end position="559"/>
    </location>
</feature>
<feature type="compositionally biased region" description="Basic residues" evidence="1">
    <location>
        <begin position="582"/>
        <end position="592"/>
    </location>
</feature>
<feature type="compositionally biased region" description="Low complexity" evidence="1">
    <location>
        <begin position="593"/>
        <end position="604"/>
    </location>
</feature>
<feature type="modified residue" description="Phosphoserine" evidence="21">
    <location>
        <position position="446"/>
    </location>
</feature>
<feature type="modified residue" description="Phosphothreonine" evidence="20">
    <location>
        <position position="516"/>
    </location>
</feature>
<feature type="sequence conflict" description="In Ref. 5; CAA88279." evidence="16" ref="5">
    <original>Y</original>
    <variation>S</variation>
    <location>
        <position position="293"/>
    </location>
</feature>
<feature type="helix" evidence="23">
    <location>
        <begin position="124"/>
        <end position="129"/>
    </location>
</feature>
<feature type="turn" evidence="23">
    <location>
        <begin position="130"/>
        <end position="132"/>
    </location>
</feature>
<feature type="strand" evidence="23">
    <location>
        <begin position="138"/>
        <end position="141"/>
    </location>
</feature>
<feature type="strand" evidence="23">
    <location>
        <begin position="146"/>
        <end position="149"/>
    </location>
</feature>
<feature type="helix" evidence="23">
    <location>
        <begin position="179"/>
        <end position="182"/>
    </location>
</feature>
<feature type="helix" evidence="23">
    <location>
        <begin position="183"/>
        <end position="185"/>
    </location>
</feature>
<feature type="turn" evidence="23">
    <location>
        <begin position="186"/>
        <end position="189"/>
    </location>
</feature>
<feature type="helix" evidence="23">
    <location>
        <begin position="196"/>
        <end position="202"/>
    </location>
</feature>
<feature type="strand" evidence="23">
    <location>
        <begin position="210"/>
        <end position="218"/>
    </location>
</feature>
<feature type="strand" evidence="23">
    <location>
        <begin position="279"/>
        <end position="286"/>
    </location>
</feature>
<feature type="helix" evidence="23">
    <location>
        <begin position="289"/>
        <end position="299"/>
    </location>
</feature>
<feature type="turn" evidence="23">
    <location>
        <begin position="300"/>
        <end position="302"/>
    </location>
</feature>
<feature type="helix" evidence="23">
    <location>
        <begin position="307"/>
        <end position="321"/>
    </location>
</feature>
<feature type="turn" evidence="23">
    <location>
        <begin position="333"/>
        <end position="335"/>
    </location>
</feature>
<feature type="strand" evidence="23">
    <location>
        <begin position="338"/>
        <end position="340"/>
    </location>
</feature>
<feature type="helix" evidence="23">
    <location>
        <begin position="342"/>
        <end position="344"/>
    </location>
</feature>
<feature type="strand" evidence="23">
    <location>
        <begin position="352"/>
        <end position="356"/>
    </location>
</feature>
<feature type="turn" evidence="22">
    <location>
        <begin position="391"/>
        <end position="397"/>
    </location>
</feature>
<feature type="helix" evidence="22">
    <location>
        <begin position="404"/>
        <end position="412"/>
    </location>
</feature>
<feature type="turn" evidence="22">
    <location>
        <begin position="413"/>
        <end position="415"/>
    </location>
</feature>
<feature type="helix" evidence="22">
    <location>
        <begin position="476"/>
        <end position="487"/>
    </location>
</feature>